<organism>
    <name type="scientific">Clostridium botulinum (strain ATCC 19397 / Type A)</name>
    <dbReference type="NCBI Taxonomy" id="441770"/>
    <lineage>
        <taxon>Bacteria</taxon>
        <taxon>Bacillati</taxon>
        <taxon>Bacillota</taxon>
        <taxon>Clostridia</taxon>
        <taxon>Eubacteriales</taxon>
        <taxon>Clostridiaceae</taxon>
        <taxon>Clostridium</taxon>
    </lineage>
</organism>
<accession>A7FQ70</accession>
<sequence>MKITKNILKAEFIKRPNRFQAYVKINEKIEMVHVPNTGRCKEILIPGSMVILREENNENRKTRYDLIAGYKGDMLINIDSQIPNKVVHEALMNLKIDILKEYTNIKREKTFGKSRFDFKLEKENGEIYYLEVKGVTLENDGLTMFPDAPTERGTKHILELIDVKNKGMGAGVLFLIQLNGVKKFTPHHKMDKNFGEALRLAKEKGVDILAYDCLVEESSISLNNPISIEI</sequence>
<name>SFSA_CLOB1</name>
<gene>
    <name evidence="1" type="primary">sfsA</name>
    <name type="ordered locus">CLB_0047</name>
</gene>
<comment type="similarity">
    <text evidence="1">Belongs to the SfsA family.</text>
</comment>
<proteinExistence type="inferred from homology"/>
<dbReference type="EMBL" id="CP000726">
    <property type="protein sequence ID" value="ABS33447.1"/>
    <property type="molecule type" value="Genomic_DNA"/>
</dbReference>
<dbReference type="RefSeq" id="WP_011947913.1">
    <property type="nucleotide sequence ID" value="NC_009697.1"/>
</dbReference>
<dbReference type="SMR" id="A7FQ70"/>
<dbReference type="GeneID" id="5184291"/>
<dbReference type="KEGG" id="cba:CLB_0047"/>
<dbReference type="HOGENOM" id="CLU_052299_1_0_9"/>
<dbReference type="GO" id="GO:0003677">
    <property type="term" value="F:DNA binding"/>
    <property type="evidence" value="ECO:0007669"/>
    <property type="project" value="InterPro"/>
</dbReference>
<dbReference type="CDD" id="cd22359">
    <property type="entry name" value="SfsA-like_bacterial"/>
    <property type="match status" value="1"/>
</dbReference>
<dbReference type="FunFam" id="2.40.50.580:FF:000002">
    <property type="entry name" value="Sugar fermentation stimulation protein homolog"/>
    <property type="match status" value="1"/>
</dbReference>
<dbReference type="Gene3D" id="2.40.50.580">
    <property type="match status" value="1"/>
</dbReference>
<dbReference type="Gene3D" id="3.40.1350.60">
    <property type="match status" value="1"/>
</dbReference>
<dbReference type="HAMAP" id="MF_00095">
    <property type="entry name" value="SfsA"/>
    <property type="match status" value="1"/>
</dbReference>
<dbReference type="InterPro" id="IPR005224">
    <property type="entry name" value="SfsA"/>
</dbReference>
<dbReference type="InterPro" id="IPR040452">
    <property type="entry name" value="SfsA_C"/>
</dbReference>
<dbReference type="InterPro" id="IPR041465">
    <property type="entry name" value="SfsA_N"/>
</dbReference>
<dbReference type="NCBIfam" id="TIGR00230">
    <property type="entry name" value="sfsA"/>
    <property type="match status" value="1"/>
</dbReference>
<dbReference type="PANTHER" id="PTHR30545">
    <property type="entry name" value="SUGAR FERMENTATION STIMULATION PROTEIN A"/>
    <property type="match status" value="1"/>
</dbReference>
<dbReference type="PANTHER" id="PTHR30545:SF2">
    <property type="entry name" value="SUGAR FERMENTATION STIMULATION PROTEIN A"/>
    <property type="match status" value="1"/>
</dbReference>
<dbReference type="Pfam" id="PF03749">
    <property type="entry name" value="SfsA"/>
    <property type="match status" value="1"/>
</dbReference>
<dbReference type="Pfam" id="PF17746">
    <property type="entry name" value="SfsA_N"/>
    <property type="match status" value="1"/>
</dbReference>
<reference key="1">
    <citation type="journal article" date="2007" name="PLoS ONE">
        <title>Analysis of the neurotoxin complex genes in Clostridium botulinum A1-A4 and B1 strains: BoNT/A3, /Ba4 and /B1 clusters are located within plasmids.</title>
        <authorList>
            <person name="Smith T.J."/>
            <person name="Hill K.K."/>
            <person name="Foley B.T."/>
            <person name="Detter J.C."/>
            <person name="Munk A.C."/>
            <person name="Bruce D.C."/>
            <person name="Doggett N.A."/>
            <person name="Smith L.A."/>
            <person name="Marks J.D."/>
            <person name="Xie G."/>
            <person name="Brettin T.S."/>
        </authorList>
    </citation>
    <scope>NUCLEOTIDE SEQUENCE [LARGE SCALE GENOMIC DNA]</scope>
    <source>
        <strain>ATCC 19397 / Type A</strain>
    </source>
</reference>
<feature type="chain" id="PRO_1000007973" description="Sugar fermentation stimulation protein homolog">
    <location>
        <begin position="1"/>
        <end position="230"/>
    </location>
</feature>
<protein>
    <recommendedName>
        <fullName evidence="1">Sugar fermentation stimulation protein homolog</fullName>
    </recommendedName>
</protein>
<evidence type="ECO:0000255" key="1">
    <source>
        <dbReference type="HAMAP-Rule" id="MF_00095"/>
    </source>
</evidence>